<evidence type="ECO:0000255" key="1">
    <source>
        <dbReference type="HAMAP-Rule" id="MF_00022"/>
    </source>
</evidence>
<accession>Q01WJ8</accession>
<sequence length="472" mass="52434">MHRVRFAPSPTGFLHIGSARTYIFNWLFARHHGGTMILRIDDTDVGRNSDASETSIFDGLAWLGLDWDEQYRQSERLPLHRAMADAILTKGMAYRDFTPAQAGDSEKSGAQGTWLFNAGMRELSREESDRRAAAGEPFALRFRVPHDREGSVQFTDAVYGEQAKGYGDIEDFALLRSDGMPTYHLANCADDADLRISHIIRGQEHLSNAFKHKLIFDAAGAESPTFAHLPLLMAPDGMKLSKRVHGPVVSVTTYRDAGFLPQAFINFLSLLGWSPKNDREKLSREEMVELFTLEGINRANAVVNFTEEEPFDAKALWLNAEHIRAMPAADLARELLPFVPVDLEKMLQITPLIQERIKLLRDVQSVADFFFVKQLPPYDSAELIPKKGDAAMAKNVLIKACDVLATAEFTHDGLEVALRAASAELGIKAGQMFEPVRVAVCGRKTAPPLFGTLEVLGREACLARIGQAIEKL</sequence>
<organism>
    <name type="scientific">Solibacter usitatus (strain Ellin6076)</name>
    <dbReference type="NCBI Taxonomy" id="234267"/>
    <lineage>
        <taxon>Bacteria</taxon>
        <taxon>Pseudomonadati</taxon>
        <taxon>Acidobacteriota</taxon>
        <taxon>Terriglobia</taxon>
        <taxon>Bryobacterales</taxon>
        <taxon>Solibacteraceae</taxon>
        <taxon>Candidatus Solibacter</taxon>
    </lineage>
</organism>
<dbReference type="EC" id="6.1.1.17" evidence="1"/>
<dbReference type="EMBL" id="CP000473">
    <property type="protein sequence ID" value="ABJ85967.1"/>
    <property type="molecule type" value="Genomic_DNA"/>
</dbReference>
<dbReference type="SMR" id="Q01WJ8"/>
<dbReference type="FunCoup" id="Q01WJ8">
    <property type="interactions" value="656"/>
</dbReference>
<dbReference type="STRING" id="234267.Acid_5011"/>
<dbReference type="KEGG" id="sus:Acid_5011"/>
<dbReference type="eggNOG" id="COG0008">
    <property type="taxonomic scope" value="Bacteria"/>
</dbReference>
<dbReference type="HOGENOM" id="CLU_015768_6_1_0"/>
<dbReference type="InParanoid" id="Q01WJ8"/>
<dbReference type="OrthoDB" id="9807503at2"/>
<dbReference type="GO" id="GO:0005829">
    <property type="term" value="C:cytosol"/>
    <property type="evidence" value="ECO:0007669"/>
    <property type="project" value="TreeGrafter"/>
</dbReference>
<dbReference type="GO" id="GO:0005524">
    <property type="term" value="F:ATP binding"/>
    <property type="evidence" value="ECO:0007669"/>
    <property type="project" value="UniProtKB-UniRule"/>
</dbReference>
<dbReference type="GO" id="GO:0004818">
    <property type="term" value="F:glutamate-tRNA ligase activity"/>
    <property type="evidence" value="ECO:0007669"/>
    <property type="project" value="UniProtKB-UniRule"/>
</dbReference>
<dbReference type="GO" id="GO:0000049">
    <property type="term" value="F:tRNA binding"/>
    <property type="evidence" value="ECO:0007669"/>
    <property type="project" value="InterPro"/>
</dbReference>
<dbReference type="GO" id="GO:0008270">
    <property type="term" value="F:zinc ion binding"/>
    <property type="evidence" value="ECO:0007669"/>
    <property type="project" value="InterPro"/>
</dbReference>
<dbReference type="GO" id="GO:0006424">
    <property type="term" value="P:glutamyl-tRNA aminoacylation"/>
    <property type="evidence" value="ECO:0007669"/>
    <property type="project" value="UniProtKB-UniRule"/>
</dbReference>
<dbReference type="CDD" id="cd00808">
    <property type="entry name" value="GluRS_core"/>
    <property type="match status" value="1"/>
</dbReference>
<dbReference type="Gene3D" id="1.10.10.350">
    <property type="match status" value="1"/>
</dbReference>
<dbReference type="Gene3D" id="3.40.50.620">
    <property type="entry name" value="HUPs"/>
    <property type="match status" value="1"/>
</dbReference>
<dbReference type="HAMAP" id="MF_00022">
    <property type="entry name" value="Glu_tRNA_synth_type1"/>
    <property type="match status" value="1"/>
</dbReference>
<dbReference type="InterPro" id="IPR045462">
    <property type="entry name" value="aa-tRNA-synth_I_cd-bd"/>
</dbReference>
<dbReference type="InterPro" id="IPR020751">
    <property type="entry name" value="aa-tRNA-synth_I_codon-bd_sub2"/>
</dbReference>
<dbReference type="InterPro" id="IPR008925">
    <property type="entry name" value="aa_tRNA-synth_I_cd-bd_sf"/>
</dbReference>
<dbReference type="InterPro" id="IPR004527">
    <property type="entry name" value="Glu-tRNA-ligase_bac/mito"/>
</dbReference>
<dbReference type="InterPro" id="IPR000924">
    <property type="entry name" value="Glu/Gln-tRNA-synth"/>
</dbReference>
<dbReference type="InterPro" id="IPR020058">
    <property type="entry name" value="Glu/Gln-tRNA-synth_Ib_cat-dom"/>
</dbReference>
<dbReference type="InterPro" id="IPR049940">
    <property type="entry name" value="GluQ/Sye"/>
</dbReference>
<dbReference type="InterPro" id="IPR033910">
    <property type="entry name" value="GluRS_core"/>
</dbReference>
<dbReference type="InterPro" id="IPR014729">
    <property type="entry name" value="Rossmann-like_a/b/a_fold"/>
</dbReference>
<dbReference type="NCBIfam" id="TIGR00464">
    <property type="entry name" value="gltX_bact"/>
    <property type="match status" value="1"/>
</dbReference>
<dbReference type="PANTHER" id="PTHR43311">
    <property type="entry name" value="GLUTAMATE--TRNA LIGASE"/>
    <property type="match status" value="1"/>
</dbReference>
<dbReference type="PANTHER" id="PTHR43311:SF2">
    <property type="entry name" value="GLUTAMATE--TRNA LIGASE, MITOCHONDRIAL-RELATED"/>
    <property type="match status" value="1"/>
</dbReference>
<dbReference type="Pfam" id="PF19269">
    <property type="entry name" value="Anticodon_2"/>
    <property type="match status" value="1"/>
</dbReference>
<dbReference type="Pfam" id="PF00749">
    <property type="entry name" value="tRNA-synt_1c"/>
    <property type="match status" value="1"/>
</dbReference>
<dbReference type="PRINTS" id="PR00987">
    <property type="entry name" value="TRNASYNTHGLU"/>
</dbReference>
<dbReference type="SUPFAM" id="SSF48163">
    <property type="entry name" value="An anticodon-binding domain of class I aminoacyl-tRNA synthetases"/>
    <property type="match status" value="1"/>
</dbReference>
<dbReference type="SUPFAM" id="SSF52374">
    <property type="entry name" value="Nucleotidylyl transferase"/>
    <property type="match status" value="1"/>
</dbReference>
<protein>
    <recommendedName>
        <fullName evidence="1">Glutamate--tRNA ligase</fullName>
        <ecNumber evidence="1">6.1.1.17</ecNumber>
    </recommendedName>
    <alternativeName>
        <fullName evidence="1">Glutamyl-tRNA synthetase</fullName>
        <shortName evidence="1">GluRS</shortName>
    </alternativeName>
</protein>
<gene>
    <name evidence="1" type="primary">gltX</name>
    <name type="ordered locus">Acid_5011</name>
</gene>
<reference key="1">
    <citation type="journal article" date="2009" name="Appl. Environ. Microbiol.">
        <title>Three genomes from the phylum Acidobacteria provide insight into the lifestyles of these microorganisms in soils.</title>
        <authorList>
            <person name="Ward N.L."/>
            <person name="Challacombe J.F."/>
            <person name="Janssen P.H."/>
            <person name="Henrissat B."/>
            <person name="Coutinho P.M."/>
            <person name="Wu M."/>
            <person name="Xie G."/>
            <person name="Haft D.H."/>
            <person name="Sait M."/>
            <person name="Badger J."/>
            <person name="Barabote R.D."/>
            <person name="Bradley B."/>
            <person name="Brettin T.S."/>
            <person name="Brinkac L.M."/>
            <person name="Bruce D."/>
            <person name="Creasy T."/>
            <person name="Daugherty S.C."/>
            <person name="Davidsen T.M."/>
            <person name="DeBoy R.T."/>
            <person name="Detter J.C."/>
            <person name="Dodson R.J."/>
            <person name="Durkin A.S."/>
            <person name="Ganapathy A."/>
            <person name="Gwinn-Giglio M."/>
            <person name="Han C.S."/>
            <person name="Khouri H."/>
            <person name="Kiss H."/>
            <person name="Kothari S.P."/>
            <person name="Madupu R."/>
            <person name="Nelson K.E."/>
            <person name="Nelson W.C."/>
            <person name="Paulsen I."/>
            <person name="Penn K."/>
            <person name="Ren Q."/>
            <person name="Rosovitz M.J."/>
            <person name="Selengut J.D."/>
            <person name="Shrivastava S."/>
            <person name="Sullivan S.A."/>
            <person name="Tapia R."/>
            <person name="Thompson L.S."/>
            <person name="Watkins K.L."/>
            <person name="Yang Q."/>
            <person name="Yu C."/>
            <person name="Zafar N."/>
            <person name="Zhou L."/>
            <person name="Kuske C.R."/>
        </authorList>
    </citation>
    <scope>NUCLEOTIDE SEQUENCE [LARGE SCALE GENOMIC DNA]</scope>
    <source>
        <strain>Ellin6076</strain>
    </source>
</reference>
<comment type="function">
    <text evidence="1">Catalyzes the attachment of glutamate to tRNA(Glu) in a two-step reaction: glutamate is first activated by ATP to form Glu-AMP and then transferred to the acceptor end of tRNA(Glu).</text>
</comment>
<comment type="catalytic activity">
    <reaction evidence="1">
        <text>tRNA(Glu) + L-glutamate + ATP = L-glutamyl-tRNA(Glu) + AMP + diphosphate</text>
        <dbReference type="Rhea" id="RHEA:23540"/>
        <dbReference type="Rhea" id="RHEA-COMP:9663"/>
        <dbReference type="Rhea" id="RHEA-COMP:9680"/>
        <dbReference type="ChEBI" id="CHEBI:29985"/>
        <dbReference type="ChEBI" id="CHEBI:30616"/>
        <dbReference type="ChEBI" id="CHEBI:33019"/>
        <dbReference type="ChEBI" id="CHEBI:78442"/>
        <dbReference type="ChEBI" id="CHEBI:78520"/>
        <dbReference type="ChEBI" id="CHEBI:456215"/>
        <dbReference type="EC" id="6.1.1.17"/>
    </reaction>
</comment>
<comment type="subunit">
    <text evidence="1">Monomer.</text>
</comment>
<comment type="subcellular location">
    <subcellularLocation>
        <location evidence="1">Cytoplasm</location>
    </subcellularLocation>
</comment>
<comment type="similarity">
    <text evidence="1">Belongs to the class-I aminoacyl-tRNA synthetase family. Glutamate--tRNA ligase type 1 subfamily.</text>
</comment>
<feature type="chain" id="PRO_1000001967" description="Glutamate--tRNA ligase">
    <location>
        <begin position="1"/>
        <end position="472"/>
    </location>
</feature>
<feature type="short sequence motif" description="'HIGH' region" evidence="1">
    <location>
        <begin position="8"/>
        <end position="18"/>
    </location>
</feature>
<feature type="short sequence motif" description="'KMSKS' region" evidence="1">
    <location>
        <begin position="239"/>
        <end position="243"/>
    </location>
</feature>
<feature type="binding site" evidence="1">
    <location>
        <position position="242"/>
    </location>
    <ligand>
        <name>ATP</name>
        <dbReference type="ChEBI" id="CHEBI:30616"/>
    </ligand>
</feature>
<name>SYE_SOLUE</name>
<keyword id="KW-0030">Aminoacyl-tRNA synthetase</keyword>
<keyword id="KW-0067">ATP-binding</keyword>
<keyword id="KW-0963">Cytoplasm</keyword>
<keyword id="KW-0436">Ligase</keyword>
<keyword id="KW-0547">Nucleotide-binding</keyword>
<keyword id="KW-0648">Protein biosynthesis</keyword>
<proteinExistence type="inferred from homology"/>